<name>PSBC_LACSA</name>
<geneLocation type="chloroplast"/>
<keyword id="KW-0007">Acetylation</keyword>
<keyword id="KW-0148">Chlorophyll</keyword>
<keyword id="KW-0150">Chloroplast</keyword>
<keyword id="KW-0157">Chromophore</keyword>
<keyword id="KW-0464">Manganese</keyword>
<keyword id="KW-0472">Membrane</keyword>
<keyword id="KW-0479">Metal-binding</keyword>
<keyword id="KW-0597">Phosphoprotein</keyword>
<keyword id="KW-0602">Photosynthesis</keyword>
<keyword id="KW-0604">Photosystem II</keyword>
<keyword id="KW-0934">Plastid</keyword>
<keyword id="KW-0793">Thylakoid</keyword>
<keyword id="KW-0812">Transmembrane</keyword>
<keyword id="KW-1133">Transmembrane helix</keyword>
<sequence>MKTLYSLRRFYPVETLFNGTLALAGRDQETTGFAWWAGNARLINLSGKLLGAHVAHAGLIVFWAGAMNLFEVAHFVPEKPMYEQGLILLPHLATLGWGVGPGGEVIDTFPYFVSGVLHLISSAVLGFGGIYHALLGPETLEESFPFFGYVWKDRNKMTTILGIHLILLGIGAFLLVFKALYFGGVYDTWAPGGGDVRKITNLTLSPSIIFGYLLKSPFGGEGWIVSVDDLEDIIGGHVWLGSICILGGIWHILTKPFAWARRALVWSGEAYLSYSLAAISVFGFIACCFVWFNNTAYPSEFYGPTGPEASQAQAFTFLVRDQRLGANVGSAQGPTGLGKYLMRSPTGEVIFGGETMRFWDLRAPWLEPLRGPNGLDLSRLKKDIQPWQERRSAEYMTHAPLGSLNSVGGVATEINAVNYVSPRSWLATSHFVLGFFFFVGHLWHAGRARAAAAGFEKGIDRDFEPVLSMTPLN</sequence>
<reference key="1">
    <citation type="journal article" date="2006" name="Transgenic Res.">
        <title>Efficient and stable transformation of Lactuca sativa L. cv. Cisco (lettuce) plastids.</title>
        <authorList>
            <person name="Kanamoto H."/>
            <person name="Yamashita A."/>
            <person name="Asao H."/>
            <person name="Okumura S."/>
            <person name="Takase H."/>
            <person name="Hattori M."/>
            <person name="Yokota A."/>
            <person name="Tomizawa K."/>
        </authorList>
    </citation>
    <scope>NUCLEOTIDE SEQUENCE [LARGE SCALE GENOMIC DNA]</scope>
    <source>
        <strain>cv. Cisco</strain>
    </source>
</reference>
<reference key="2">
    <citation type="submission" date="2006-01" db="EMBL/GenBank/DDBJ databases">
        <title>A comparison of the first two published chloroplast genomes in Asteraceae: Lactuca and Helianthus.</title>
        <authorList>
            <person name="Timme R.E."/>
            <person name="Kuehl J.V."/>
            <person name="Boore J.L."/>
            <person name="Jansen R.K."/>
        </authorList>
    </citation>
    <scope>NUCLEOTIDE SEQUENCE [LARGE SCALE GENOMIC DNA]</scope>
    <source>
        <strain>cv. Salinas</strain>
    </source>
</reference>
<protein>
    <recommendedName>
        <fullName evidence="1">Photosystem II CP43 reaction center protein</fullName>
    </recommendedName>
    <alternativeName>
        <fullName evidence="1">PSII 43 kDa protein</fullName>
    </alternativeName>
    <alternativeName>
        <fullName evidence="1">Protein CP-43</fullName>
    </alternativeName>
</protein>
<evidence type="ECO:0000255" key="1">
    <source>
        <dbReference type="HAMAP-Rule" id="MF_01496"/>
    </source>
</evidence>
<organism>
    <name type="scientific">Lactuca sativa</name>
    <name type="common">Garden lettuce</name>
    <dbReference type="NCBI Taxonomy" id="4236"/>
    <lineage>
        <taxon>Eukaryota</taxon>
        <taxon>Viridiplantae</taxon>
        <taxon>Streptophyta</taxon>
        <taxon>Embryophyta</taxon>
        <taxon>Tracheophyta</taxon>
        <taxon>Spermatophyta</taxon>
        <taxon>Magnoliopsida</taxon>
        <taxon>eudicotyledons</taxon>
        <taxon>Gunneridae</taxon>
        <taxon>Pentapetalae</taxon>
        <taxon>asterids</taxon>
        <taxon>campanulids</taxon>
        <taxon>Asterales</taxon>
        <taxon>Asteraceae</taxon>
        <taxon>Cichorioideae</taxon>
        <taxon>Cichorieae</taxon>
        <taxon>Lactucinae</taxon>
        <taxon>Lactuca</taxon>
    </lineage>
</organism>
<dbReference type="EMBL" id="DQ383816">
    <property type="protein sequence ID" value="ABD47229.1"/>
    <property type="molecule type" value="Genomic_DNA"/>
</dbReference>
<dbReference type="EMBL" id="AP007232">
    <property type="protein sequence ID" value="BAE47590.1"/>
    <property type="molecule type" value="Genomic_DNA"/>
</dbReference>
<dbReference type="RefSeq" id="YP_398325.1">
    <property type="nucleotide sequence ID" value="NC_007578.1"/>
</dbReference>
<dbReference type="SMR" id="Q332Y2"/>
<dbReference type="GeneID" id="3772837"/>
<dbReference type="KEGG" id="lsv:3772837"/>
<dbReference type="OrthoDB" id="1924410at2759"/>
<dbReference type="GO" id="GO:0009535">
    <property type="term" value="C:chloroplast thylakoid membrane"/>
    <property type="evidence" value="ECO:0007669"/>
    <property type="project" value="UniProtKB-SubCell"/>
</dbReference>
<dbReference type="GO" id="GO:0009523">
    <property type="term" value="C:photosystem II"/>
    <property type="evidence" value="ECO:0007669"/>
    <property type="project" value="UniProtKB-KW"/>
</dbReference>
<dbReference type="GO" id="GO:0016168">
    <property type="term" value="F:chlorophyll binding"/>
    <property type="evidence" value="ECO:0007669"/>
    <property type="project" value="UniProtKB-UniRule"/>
</dbReference>
<dbReference type="GO" id="GO:0045156">
    <property type="term" value="F:electron transporter, transferring electrons within the cyclic electron transport pathway of photosynthesis activity"/>
    <property type="evidence" value="ECO:0007669"/>
    <property type="project" value="InterPro"/>
</dbReference>
<dbReference type="GO" id="GO:0046872">
    <property type="term" value="F:metal ion binding"/>
    <property type="evidence" value="ECO:0007669"/>
    <property type="project" value="UniProtKB-KW"/>
</dbReference>
<dbReference type="GO" id="GO:0009772">
    <property type="term" value="P:photosynthetic electron transport in photosystem II"/>
    <property type="evidence" value="ECO:0007669"/>
    <property type="project" value="InterPro"/>
</dbReference>
<dbReference type="FunFam" id="1.10.10.670:FF:000001">
    <property type="entry name" value="Photosystem II CP43 reaction center protein"/>
    <property type="match status" value="1"/>
</dbReference>
<dbReference type="Gene3D" id="1.10.10.670">
    <property type="entry name" value="photosystem ii from thermosynechococcus elongatus"/>
    <property type="match status" value="1"/>
</dbReference>
<dbReference type="HAMAP" id="MF_01496">
    <property type="entry name" value="PSII_PsbC_CP43"/>
    <property type="match status" value="1"/>
</dbReference>
<dbReference type="InterPro" id="IPR000932">
    <property type="entry name" value="PS_antenna-like"/>
</dbReference>
<dbReference type="InterPro" id="IPR036001">
    <property type="entry name" value="PS_II_antenna-like_sf"/>
</dbReference>
<dbReference type="InterPro" id="IPR005869">
    <property type="entry name" value="PSII_PsbC"/>
</dbReference>
<dbReference type="InterPro" id="IPR044900">
    <property type="entry name" value="PSII_PsbC_sf"/>
</dbReference>
<dbReference type="NCBIfam" id="TIGR01153">
    <property type="entry name" value="psbC"/>
    <property type="match status" value="1"/>
</dbReference>
<dbReference type="Pfam" id="PF00421">
    <property type="entry name" value="PSII"/>
    <property type="match status" value="1"/>
</dbReference>
<dbReference type="SUPFAM" id="SSF161077">
    <property type="entry name" value="Photosystem II antenna protein-like"/>
    <property type="match status" value="1"/>
</dbReference>
<comment type="function">
    <text evidence="1">One of the components of the core complex of photosystem II (PSII). It binds chlorophyll and helps catalyze the primary light-induced photochemical processes of PSII. PSII is a light-driven water:plastoquinone oxidoreductase, using light energy to abstract electrons from H(2)O, generating O(2) and a proton gradient subsequently used for ATP formation.</text>
</comment>
<comment type="cofactor">
    <text evidence="1">Binds multiple chlorophylls and provides some of the ligands for the Ca-4Mn-5O cluster of the oxygen-evolving complex. It may also provide a ligand for a Cl- that is required for oxygen evolution. PSII binds additional chlorophylls, carotenoids and specific lipids.</text>
</comment>
<comment type="subunit">
    <text evidence="1">PSII is composed of 1 copy each of membrane proteins PsbA, PsbB, PsbC, PsbD, PsbE, PsbF, PsbH, PsbI, PsbJ, PsbK, PsbL, PsbM, PsbT, PsbX, PsbY, PsbZ, Psb30/Ycf12, at least 3 peripheral proteins of the oxygen-evolving complex and a large number of cofactors. It forms dimeric complexes.</text>
</comment>
<comment type="subcellular location">
    <subcellularLocation>
        <location evidence="1">Plastid</location>
        <location evidence="1">Chloroplast thylakoid membrane</location>
        <topology evidence="1">Multi-pass membrane protein</topology>
    </subcellularLocation>
</comment>
<comment type="similarity">
    <text evidence="1">Belongs to the PsbB/PsbC family. PsbC subfamily.</text>
</comment>
<feature type="propeptide" id="PRO_0000431156" evidence="1">
    <location>
        <begin position="1"/>
        <end position="14"/>
    </location>
</feature>
<feature type="chain" id="PRO_0000361404" description="Photosystem II CP43 reaction center protein" evidence="1">
    <location>
        <begin position="15"/>
        <end position="473"/>
    </location>
</feature>
<feature type="transmembrane region" description="Helical" evidence="1">
    <location>
        <begin position="69"/>
        <end position="93"/>
    </location>
</feature>
<feature type="transmembrane region" description="Helical" evidence="1">
    <location>
        <begin position="134"/>
        <end position="155"/>
    </location>
</feature>
<feature type="transmembrane region" description="Helical" evidence="1">
    <location>
        <begin position="178"/>
        <end position="200"/>
    </location>
</feature>
<feature type="transmembrane region" description="Helical" evidence="1">
    <location>
        <begin position="255"/>
        <end position="275"/>
    </location>
</feature>
<feature type="transmembrane region" description="Helical" evidence="1">
    <location>
        <begin position="291"/>
        <end position="312"/>
    </location>
</feature>
<feature type="transmembrane region" description="Helical" evidence="1">
    <location>
        <begin position="447"/>
        <end position="471"/>
    </location>
</feature>
<feature type="binding site" evidence="1">
    <location>
        <position position="367"/>
    </location>
    <ligand>
        <name>[CaMn4O5] cluster</name>
        <dbReference type="ChEBI" id="CHEBI:189552"/>
    </ligand>
</feature>
<feature type="modified residue" description="N-acetylthreonine" evidence="1">
    <location>
        <position position="15"/>
    </location>
</feature>
<feature type="modified residue" description="Phosphothreonine" evidence="1">
    <location>
        <position position="15"/>
    </location>
</feature>
<gene>
    <name evidence="1" type="primary">psbC</name>
</gene>
<proteinExistence type="inferred from homology"/>
<accession>Q332Y2</accession>